<sequence>MQKATHSITPEGFPVIGLTALAALVFAIIDCWFMAVVFLLLCWFSVHFFRDPERVVPSAPGAGVSPADGRIIKVQPMPDPFTGEPRMCVCIFMNVFNVHVNRFPVSGTVQSIAYHPGKYFNASWDKASTDNERCAYDIVDADGLRWSMVQIAGLIARRIVCRVEEGDTLRRGERCGMIRFGSRVDVYLPEEYEPKVTVGETVFAGQTVLAAKKEQPAE</sequence>
<comment type="function">
    <text evidence="1">Catalyzes the formation of phosphatidylethanolamine (PtdEtn) from phosphatidylserine (PtdSer).</text>
</comment>
<comment type="catalytic activity">
    <reaction evidence="1">
        <text>a 1,2-diacyl-sn-glycero-3-phospho-L-serine + H(+) = a 1,2-diacyl-sn-glycero-3-phosphoethanolamine + CO2</text>
        <dbReference type="Rhea" id="RHEA:20828"/>
        <dbReference type="ChEBI" id="CHEBI:15378"/>
        <dbReference type="ChEBI" id="CHEBI:16526"/>
        <dbReference type="ChEBI" id="CHEBI:57262"/>
        <dbReference type="ChEBI" id="CHEBI:64612"/>
        <dbReference type="EC" id="4.1.1.65"/>
    </reaction>
</comment>
<comment type="cofactor">
    <cofactor evidence="1">
        <name>pyruvate</name>
        <dbReference type="ChEBI" id="CHEBI:15361"/>
    </cofactor>
    <text evidence="1">Binds 1 pyruvoyl group covalently per subunit.</text>
</comment>
<comment type="pathway">
    <text evidence="1">Phospholipid metabolism; phosphatidylethanolamine biosynthesis; phosphatidylethanolamine from CDP-diacylglycerol: step 2/2.</text>
</comment>
<comment type="subunit">
    <text evidence="1">Heterodimer of a large membrane-associated beta subunit and a small pyruvoyl-containing alpha subunit.</text>
</comment>
<comment type="subcellular location">
    <subcellularLocation>
        <location evidence="1">Cell membrane</location>
        <topology evidence="1">Peripheral membrane protein</topology>
    </subcellularLocation>
</comment>
<comment type="PTM">
    <text evidence="1">Is synthesized initially as an inactive proenzyme. Formation of the active enzyme involves a self-maturation process in which the active site pyruvoyl group is generated from an internal serine residue via an autocatalytic post-translational modification. Two non-identical subunits are generated from the proenzyme in this reaction, and the pyruvate is formed at the N-terminus of the alpha chain, which is derived from the carboxyl end of the proenzyme. The post-translation cleavage follows an unusual pathway, termed non-hydrolytic serinolysis, in which the side chain hydroxyl group of the serine supplies its oxygen atom to form the C-terminus of the beta chain, while the remainder of the serine residue undergoes an oxidative deamination to produce ammonia and the pyruvoyl prosthetic group on the alpha chain.</text>
</comment>
<comment type="similarity">
    <text evidence="1">Belongs to the phosphatidylserine decarboxylase family. PSD-A subfamily.</text>
</comment>
<dbReference type="EC" id="4.1.1.65" evidence="1"/>
<dbReference type="EMBL" id="CP000112">
    <property type="protein sequence ID" value="ABB40010.1"/>
    <property type="molecule type" value="Genomic_DNA"/>
</dbReference>
<dbReference type="RefSeq" id="WP_011368961.1">
    <property type="nucleotide sequence ID" value="NC_007519.1"/>
</dbReference>
<dbReference type="STRING" id="207559.Dde_3216"/>
<dbReference type="KEGG" id="dde:Dde_3216"/>
<dbReference type="eggNOG" id="COG0688">
    <property type="taxonomic scope" value="Bacteria"/>
</dbReference>
<dbReference type="HOGENOM" id="CLU_072492_0_0_7"/>
<dbReference type="UniPathway" id="UPA00558">
    <property type="reaction ID" value="UER00616"/>
</dbReference>
<dbReference type="Proteomes" id="UP000002710">
    <property type="component" value="Chromosome"/>
</dbReference>
<dbReference type="GO" id="GO:0005886">
    <property type="term" value="C:plasma membrane"/>
    <property type="evidence" value="ECO:0007669"/>
    <property type="project" value="UniProtKB-SubCell"/>
</dbReference>
<dbReference type="GO" id="GO:0004609">
    <property type="term" value="F:phosphatidylserine decarboxylase activity"/>
    <property type="evidence" value="ECO:0007669"/>
    <property type="project" value="UniProtKB-UniRule"/>
</dbReference>
<dbReference type="GO" id="GO:0006646">
    <property type="term" value="P:phosphatidylethanolamine biosynthetic process"/>
    <property type="evidence" value="ECO:0007669"/>
    <property type="project" value="UniProtKB-UniRule"/>
</dbReference>
<dbReference type="HAMAP" id="MF_00664">
    <property type="entry name" value="PS_decarb_PSD_A"/>
    <property type="match status" value="1"/>
</dbReference>
<dbReference type="InterPro" id="IPR003817">
    <property type="entry name" value="PS_Dcarbxylase"/>
</dbReference>
<dbReference type="InterPro" id="IPR033175">
    <property type="entry name" value="PSD-A"/>
</dbReference>
<dbReference type="NCBIfam" id="NF003678">
    <property type="entry name" value="PRK05305.1-2"/>
    <property type="match status" value="1"/>
</dbReference>
<dbReference type="NCBIfam" id="NF003685">
    <property type="entry name" value="PRK05305.2-5"/>
    <property type="match status" value="1"/>
</dbReference>
<dbReference type="PANTHER" id="PTHR35809">
    <property type="entry name" value="ARCHAETIDYLSERINE DECARBOXYLASE PROENZYME-RELATED"/>
    <property type="match status" value="1"/>
</dbReference>
<dbReference type="PANTHER" id="PTHR35809:SF1">
    <property type="entry name" value="ARCHAETIDYLSERINE DECARBOXYLASE PROENZYME-RELATED"/>
    <property type="match status" value="1"/>
</dbReference>
<dbReference type="Pfam" id="PF02666">
    <property type="entry name" value="PS_Dcarbxylase"/>
    <property type="match status" value="1"/>
</dbReference>
<protein>
    <recommendedName>
        <fullName evidence="1">Phosphatidylserine decarboxylase proenzyme</fullName>
        <ecNumber evidence="1">4.1.1.65</ecNumber>
    </recommendedName>
    <component>
        <recommendedName>
            <fullName evidence="1">Phosphatidylserine decarboxylase alpha chain</fullName>
        </recommendedName>
    </component>
    <component>
        <recommendedName>
            <fullName evidence="1">Phosphatidylserine decarboxylase beta chain</fullName>
        </recommendedName>
    </component>
</protein>
<accession>Q30WD6</accession>
<organism>
    <name type="scientific">Oleidesulfovibrio alaskensis (strain ATCC BAA-1058 / DSM 17464 / G20)</name>
    <name type="common">Desulfovibrio alaskensis</name>
    <dbReference type="NCBI Taxonomy" id="207559"/>
    <lineage>
        <taxon>Bacteria</taxon>
        <taxon>Pseudomonadati</taxon>
        <taxon>Thermodesulfobacteriota</taxon>
        <taxon>Desulfovibrionia</taxon>
        <taxon>Desulfovibrionales</taxon>
        <taxon>Desulfovibrionaceae</taxon>
        <taxon>Oleidesulfovibrio</taxon>
    </lineage>
</organism>
<name>PSD_OLEA2</name>
<reference key="1">
    <citation type="journal article" date="2011" name="J. Bacteriol.">
        <title>Complete genome sequence and updated annotation of Desulfovibrio alaskensis G20.</title>
        <authorList>
            <person name="Hauser L.J."/>
            <person name="Land M.L."/>
            <person name="Brown S.D."/>
            <person name="Larimer F."/>
            <person name="Keller K.L."/>
            <person name="Rapp-Giles B.J."/>
            <person name="Price M.N."/>
            <person name="Lin M."/>
            <person name="Bruce D.C."/>
            <person name="Detter J.C."/>
            <person name="Tapia R."/>
            <person name="Han C.S."/>
            <person name="Goodwin L.A."/>
            <person name="Cheng J.F."/>
            <person name="Pitluck S."/>
            <person name="Copeland A."/>
            <person name="Lucas S."/>
            <person name="Nolan M."/>
            <person name="Lapidus A.L."/>
            <person name="Palumbo A.V."/>
            <person name="Wall J.D."/>
        </authorList>
    </citation>
    <scope>NUCLEOTIDE SEQUENCE [LARGE SCALE GENOMIC DNA]</scope>
    <source>
        <strain>ATCC BAA-1058 / DSM 17464 / G20</strain>
    </source>
</reference>
<proteinExistence type="inferred from homology"/>
<evidence type="ECO:0000255" key="1">
    <source>
        <dbReference type="HAMAP-Rule" id="MF_00664"/>
    </source>
</evidence>
<gene>
    <name evidence="1" type="primary">psd</name>
    <name type="ordered locus">Dde_3216</name>
</gene>
<feature type="chain" id="PRO_0000262207" description="Phosphatidylserine decarboxylase beta chain" evidence="1">
    <location>
        <begin position="1"/>
        <end position="181"/>
    </location>
</feature>
<feature type="chain" id="PRO_0000262208" description="Phosphatidylserine decarboxylase alpha chain" evidence="1">
    <location>
        <begin position="182"/>
        <end position="218"/>
    </location>
</feature>
<feature type="active site" description="Schiff-base intermediate with substrate; via pyruvic acid" evidence="1">
    <location>
        <position position="182"/>
    </location>
</feature>
<feature type="site" description="Cleavage (non-hydrolytic); by autocatalysis" evidence="1">
    <location>
        <begin position="181"/>
        <end position="182"/>
    </location>
</feature>
<feature type="modified residue" description="Pyruvic acid (Ser); by autocatalysis" evidence="1">
    <location>
        <position position="182"/>
    </location>
</feature>
<keyword id="KW-1003">Cell membrane</keyword>
<keyword id="KW-0210">Decarboxylase</keyword>
<keyword id="KW-0444">Lipid biosynthesis</keyword>
<keyword id="KW-0443">Lipid metabolism</keyword>
<keyword id="KW-0456">Lyase</keyword>
<keyword id="KW-0472">Membrane</keyword>
<keyword id="KW-0594">Phospholipid biosynthesis</keyword>
<keyword id="KW-1208">Phospholipid metabolism</keyword>
<keyword id="KW-0670">Pyruvate</keyword>
<keyword id="KW-1185">Reference proteome</keyword>
<keyword id="KW-0865">Zymogen</keyword>